<protein>
    <recommendedName>
        <fullName>Bifunctional ribose 1,5-bisphosphokinase-thymidine phosphorylase</fullName>
    </recommendedName>
    <domain>
        <recommendedName>
            <fullName>Ribose 1,5-bisphosphate phosphokinase PhnN</fullName>
            <ecNumber>2.7.4.23</ecNumber>
        </recommendedName>
        <alternativeName>
            <fullName>Ribose 1,5-bisphosphokinase</fullName>
        </alternativeName>
    </domain>
    <domain>
        <recommendedName>
            <fullName>Putative thymidine phosphorylase</fullName>
            <ecNumber>2.4.2.4</ecNumber>
        </recommendedName>
        <alternativeName>
            <fullName>TdRPase</fullName>
        </alternativeName>
    </domain>
</protein>
<dbReference type="EC" id="2.7.4.23"/>
<dbReference type="EC" id="2.4.2.4"/>
<dbReference type="EMBL" id="AM260480">
    <property type="protein sequence ID" value="CAJ95355.1"/>
    <property type="molecule type" value="Genomic_DNA"/>
</dbReference>
<dbReference type="RefSeq" id="WP_011616677.1">
    <property type="nucleotide sequence ID" value="NC_008314.1"/>
</dbReference>
<dbReference type="SMR" id="Q0K3R9"/>
<dbReference type="STRING" id="381666.H16_B0558"/>
<dbReference type="KEGG" id="reh:H16_B0558"/>
<dbReference type="eggNOG" id="COG0213">
    <property type="taxonomic scope" value="Bacteria"/>
</dbReference>
<dbReference type="eggNOG" id="COG3709">
    <property type="taxonomic scope" value="Bacteria"/>
</dbReference>
<dbReference type="HOGENOM" id="CLU_025040_6_0_4"/>
<dbReference type="OrthoDB" id="341217at2"/>
<dbReference type="UniPathway" id="UPA00087">
    <property type="reaction ID" value="UER00175"/>
</dbReference>
<dbReference type="Proteomes" id="UP000008210">
    <property type="component" value="Chromosome 2"/>
</dbReference>
<dbReference type="GO" id="GO:0005829">
    <property type="term" value="C:cytosol"/>
    <property type="evidence" value="ECO:0007669"/>
    <property type="project" value="TreeGrafter"/>
</dbReference>
<dbReference type="GO" id="GO:0004645">
    <property type="term" value="F:1,4-alpha-oligoglucan phosphorylase activity"/>
    <property type="evidence" value="ECO:0007669"/>
    <property type="project" value="InterPro"/>
</dbReference>
<dbReference type="GO" id="GO:0005524">
    <property type="term" value="F:ATP binding"/>
    <property type="evidence" value="ECO:0007669"/>
    <property type="project" value="UniProtKB-KW"/>
</dbReference>
<dbReference type="GO" id="GO:0033863">
    <property type="term" value="F:ribose 1,5-bisphosphate phosphokinase activity"/>
    <property type="evidence" value="ECO:0007669"/>
    <property type="project" value="UniProtKB-UniRule"/>
</dbReference>
<dbReference type="GO" id="GO:0009032">
    <property type="term" value="F:thymidine phosphorylase activity"/>
    <property type="evidence" value="ECO:0007669"/>
    <property type="project" value="UniProtKB-UniRule"/>
</dbReference>
<dbReference type="GO" id="GO:0006015">
    <property type="term" value="P:5-phosphoribose 1-diphosphate biosynthetic process"/>
    <property type="evidence" value="ECO:0007669"/>
    <property type="project" value="UniProtKB-UniRule"/>
</dbReference>
<dbReference type="GO" id="GO:0019634">
    <property type="term" value="P:organic phosphonate metabolic process"/>
    <property type="evidence" value="ECO:0007669"/>
    <property type="project" value="UniProtKB-UniRule"/>
</dbReference>
<dbReference type="GO" id="GO:0015716">
    <property type="term" value="P:organic phosphonate transport"/>
    <property type="evidence" value="ECO:0007669"/>
    <property type="project" value="UniProtKB-KW"/>
</dbReference>
<dbReference type="GO" id="GO:0006206">
    <property type="term" value="P:pyrimidine nucleobase metabolic process"/>
    <property type="evidence" value="ECO:0007669"/>
    <property type="project" value="InterPro"/>
</dbReference>
<dbReference type="GO" id="GO:0006213">
    <property type="term" value="P:pyrimidine nucleoside metabolic process"/>
    <property type="evidence" value="ECO:0007669"/>
    <property type="project" value="InterPro"/>
</dbReference>
<dbReference type="Gene3D" id="1.20.970.50">
    <property type="match status" value="1"/>
</dbReference>
<dbReference type="Gene3D" id="3.40.1030.10">
    <property type="entry name" value="Nucleoside phosphorylase/phosphoribosyltransferase catalytic domain"/>
    <property type="match status" value="1"/>
</dbReference>
<dbReference type="Gene3D" id="3.40.50.300">
    <property type="entry name" value="P-loop containing nucleotide triphosphate hydrolases"/>
    <property type="match status" value="1"/>
</dbReference>
<dbReference type="Gene3D" id="3.90.1170.30">
    <property type="entry name" value="Pyrimidine nucleoside phosphorylase-like, C-terminal domain"/>
    <property type="match status" value="1"/>
</dbReference>
<dbReference type="HAMAP" id="MF_00836">
    <property type="entry name" value="PhnN"/>
    <property type="match status" value="1"/>
</dbReference>
<dbReference type="HAMAP" id="MF_00703">
    <property type="entry name" value="Thymid_phosp_2"/>
    <property type="match status" value="1"/>
</dbReference>
<dbReference type="InterPro" id="IPR000312">
    <property type="entry name" value="Glycosyl_Trfase_fam3"/>
</dbReference>
<dbReference type="InterPro" id="IPR035902">
    <property type="entry name" value="Nuc_phospho_transferase"/>
</dbReference>
<dbReference type="InterPro" id="IPR027417">
    <property type="entry name" value="P-loop_NTPase"/>
</dbReference>
<dbReference type="InterPro" id="IPR012699">
    <property type="entry name" value="PhnN"/>
</dbReference>
<dbReference type="InterPro" id="IPR036566">
    <property type="entry name" value="PYNP-like_C_sf"/>
</dbReference>
<dbReference type="InterPro" id="IPR013102">
    <property type="entry name" value="PYNP_C"/>
</dbReference>
<dbReference type="InterPro" id="IPR017872">
    <property type="entry name" value="Pyrmidine_PPase_CS"/>
</dbReference>
<dbReference type="InterPro" id="IPR028579">
    <property type="entry name" value="Thym_Pase_Put"/>
</dbReference>
<dbReference type="InterPro" id="IPR000053">
    <property type="entry name" value="Thymidine/pyrmidine_PPase"/>
</dbReference>
<dbReference type="NCBIfam" id="TIGR02322">
    <property type="entry name" value="phosphon_PhnN"/>
    <property type="match status" value="1"/>
</dbReference>
<dbReference type="NCBIfam" id="NF003338">
    <property type="entry name" value="PRK04350.1"/>
    <property type="match status" value="1"/>
</dbReference>
<dbReference type="PANTHER" id="PTHR10515">
    <property type="entry name" value="THYMIDINE PHOSPHORYLASE"/>
    <property type="match status" value="1"/>
</dbReference>
<dbReference type="PANTHER" id="PTHR10515:SF0">
    <property type="entry name" value="THYMIDINE PHOSPHORYLASE"/>
    <property type="match status" value="1"/>
</dbReference>
<dbReference type="Pfam" id="PF00591">
    <property type="entry name" value="Glycos_transf_3"/>
    <property type="match status" value="1"/>
</dbReference>
<dbReference type="Pfam" id="PF07831">
    <property type="entry name" value="PYNP_C"/>
    <property type="match status" value="1"/>
</dbReference>
<dbReference type="SMART" id="SM00941">
    <property type="entry name" value="PYNP_C"/>
    <property type="match status" value="1"/>
</dbReference>
<dbReference type="SUPFAM" id="SSF52418">
    <property type="entry name" value="Nucleoside phosphorylase/phosphoribosyltransferase catalytic domain"/>
    <property type="match status" value="1"/>
</dbReference>
<dbReference type="SUPFAM" id="SSF52540">
    <property type="entry name" value="P-loop containing nucleoside triphosphate hydrolases"/>
    <property type="match status" value="1"/>
</dbReference>
<dbReference type="SUPFAM" id="SSF54680">
    <property type="entry name" value="Pyrimidine nucleoside phosphorylase C-terminal domain"/>
    <property type="match status" value="1"/>
</dbReference>
<dbReference type="PROSITE" id="PS00647">
    <property type="entry name" value="THYMID_PHOSPHORYLASE"/>
    <property type="match status" value="1"/>
</dbReference>
<gene>
    <name type="primary">phnN</name>
    <name type="ordered locus">H16_B0558</name>
</gene>
<accession>Q0K3R9</accession>
<name>RBKTP_CUPNH</name>
<sequence length="601" mass="63353">MKATGTFFFVVGPSGAGKDSLIDGARAALDGDYVFARRVITRPDGSAGEEHEGVTEAEFARRQRSGEFLVTWDAHDLRYGLPKSLMCELERGRNVVANGSRGVIAELAARLPRFVVVLVTAPHDVLARRIAARGRESGDQVASRVARAGAPVPPHVPCITVSNHSTLEAGTARFVEALRTGTRTSAAERPASRTNLMAKLRGEPLDEAAYVAVLQDAIAGRYTEAELTEFLVAATRTLTDEEVVALARARTAFTPRIDWDEPVVVDKHSMGGVPGSRITLIVVPIVAAYGLAMPKTSSRAITSAAGTADAMETIARVDLAHEDVRRCVAQARACIAWNGRLNHSVVDDVMNAITRPLRLDSRRWSVASILSKKYTAGATHVIVDLPYGPQTKLATRADAEALGALFEHVGKGLGLHVRALVTDGSGPIGRGIGPALEVRDVRLVLDNAPDAPADLRDKALRFAGEIIAFDPRVDSPEHGMQIAAALLHEGKARAAFDRIAAAQGVRCDPVAPGTHTLVVPATTRGRVAGVDGLQISGVARAAGAPRDGGAGVDMLCAIGAKVAPGQPLYRIHSDSAEALEAAAALVRAGGECCQAVRIDPD</sequence>
<evidence type="ECO:0000250" key="1"/>
<evidence type="ECO:0000305" key="2"/>
<comment type="function">
    <text evidence="1">Catalyzes the phosphorylation of ribose 1,5-bisphosphate to 5-phospho-D-ribosyl alpha-1-diphosphate (PRPP).</text>
</comment>
<comment type="catalytic activity">
    <reaction>
        <text>alpha-D-ribose 1,5-bisphosphate + ATP = 5-phospho-alpha-D-ribose 1-diphosphate + ADP</text>
        <dbReference type="Rhea" id="RHEA:20109"/>
        <dbReference type="ChEBI" id="CHEBI:30616"/>
        <dbReference type="ChEBI" id="CHEBI:58017"/>
        <dbReference type="ChEBI" id="CHEBI:68688"/>
        <dbReference type="ChEBI" id="CHEBI:456216"/>
        <dbReference type="EC" id="2.7.4.23"/>
    </reaction>
</comment>
<comment type="catalytic activity">
    <reaction>
        <text>thymidine + phosphate = 2-deoxy-alpha-D-ribose 1-phosphate + thymine</text>
        <dbReference type="Rhea" id="RHEA:16037"/>
        <dbReference type="ChEBI" id="CHEBI:17748"/>
        <dbReference type="ChEBI" id="CHEBI:17821"/>
        <dbReference type="ChEBI" id="CHEBI:43474"/>
        <dbReference type="ChEBI" id="CHEBI:57259"/>
        <dbReference type="EC" id="2.4.2.4"/>
    </reaction>
</comment>
<comment type="pathway">
    <text>Metabolic intermediate biosynthesis; 5-phospho-alpha-D-ribose 1-diphosphate biosynthesis; 5-phospho-alpha-D-ribose 1-diphosphate from D-ribose 5-phosphate (route II): step 3/3.</text>
</comment>
<comment type="similarity">
    <text evidence="2">In the N-terminal section; belongs to the ribose 1,5-bisphosphokinase family.</text>
</comment>
<comment type="similarity">
    <text evidence="2">In the C-terminal section; belongs to the thymidine/pyrimidine-nucleoside phosphorylase family. Type 2 subfamily.</text>
</comment>
<feature type="chain" id="PRO_0000314709" description="Bifunctional ribose 1,5-bisphosphokinase-thymidine phosphorylase">
    <location>
        <begin position="1"/>
        <end position="601"/>
    </location>
</feature>
<feature type="region of interest" description="Ribose 1,5-bisphosphokinase">
    <location>
        <begin position="1"/>
        <end position="177"/>
    </location>
</feature>
<feature type="region of interest" description="Thymidinephosphorylase">
    <location>
        <begin position="178"/>
        <end position="601"/>
    </location>
</feature>
<reference key="1">
    <citation type="journal article" date="2006" name="Nat. Biotechnol.">
        <title>Genome sequence of the bioplastic-producing 'Knallgas' bacterium Ralstonia eutropha H16.</title>
        <authorList>
            <person name="Pohlmann A."/>
            <person name="Fricke W.F."/>
            <person name="Reinecke F."/>
            <person name="Kusian B."/>
            <person name="Liesegang H."/>
            <person name="Cramm R."/>
            <person name="Eitinger T."/>
            <person name="Ewering C."/>
            <person name="Poetter M."/>
            <person name="Schwartz E."/>
            <person name="Strittmatter A."/>
            <person name="Voss I."/>
            <person name="Gottschalk G."/>
            <person name="Steinbuechel A."/>
            <person name="Friedrich B."/>
            <person name="Bowien B."/>
        </authorList>
    </citation>
    <scope>NUCLEOTIDE SEQUENCE [LARGE SCALE GENOMIC DNA]</scope>
    <source>
        <strain>ATCC 17699 / DSM 428 / KCTC 22496 / NCIMB 10442 / H16 / Stanier 337</strain>
    </source>
</reference>
<organism>
    <name type="scientific">Cupriavidus necator (strain ATCC 17699 / DSM 428 / KCTC 22496 / NCIMB 10442 / H16 / Stanier 337)</name>
    <name type="common">Ralstonia eutropha</name>
    <dbReference type="NCBI Taxonomy" id="381666"/>
    <lineage>
        <taxon>Bacteria</taxon>
        <taxon>Pseudomonadati</taxon>
        <taxon>Pseudomonadota</taxon>
        <taxon>Betaproteobacteria</taxon>
        <taxon>Burkholderiales</taxon>
        <taxon>Burkholderiaceae</taxon>
        <taxon>Cupriavidus</taxon>
    </lineage>
</organism>
<keyword id="KW-0019">Alkylphosphonate uptake</keyword>
<keyword id="KW-0067">ATP-binding</keyword>
<keyword id="KW-0328">Glycosyltransferase</keyword>
<keyword id="KW-0511">Multifunctional enzyme</keyword>
<keyword id="KW-0547">Nucleotide-binding</keyword>
<keyword id="KW-1185">Reference proteome</keyword>
<keyword id="KW-0808">Transferase</keyword>
<proteinExistence type="inferred from homology"/>